<keyword id="KW-0002">3D-structure</keyword>
<keyword id="KW-0903">Direct protein sequencing</keyword>
<keyword id="KW-0646">Protease inhibitor</keyword>
<keyword id="KW-0964">Secreted</keyword>
<keyword id="KW-0722">Serine protease inhibitor</keyword>
<keyword id="KW-0732">Signal</keyword>
<proteinExistence type="evidence at protein level"/>
<protein>
    <recommendedName>
        <fullName>Tsetse thrombin inhibitor</fullName>
    </recommendedName>
</protein>
<accession>O97373</accession>
<evidence type="ECO:0000255" key="1"/>
<evidence type="ECO:0000269" key="2">
    <source>
    </source>
</evidence>
<evidence type="ECO:0000269" key="3">
    <source>
    </source>
</evidence>
<evidence type="ECO:0007829" key="4">
    <source>
        <dbReference type="PDB" id="6TKL"/>
    </source>
</evidence>
<dbReference type="EMBL" id="AF054616">
    <property type="protein sequence ID" value="AAC79986.1"/>
    <property type="molecule type" value="mRNA"/>
</dbReference>
<dbReference type="PDB" id="6TKG">
    <property type="method" value="X-ray"/>
    <property type="resolution" value="1.35 A"/>
    <property type="chains" value="I=1-53"/>
</dbReference>
<dbReference type="PDB" id="6TKH">
    <property type="method" value="X-ray"/>
    <property type="resolution" value="1.90 A"/>
    <property type="chains" value="I=1-53"/>
</dbReference>
<dbReference type="PDB" id="6TKI">
    <property type="method" value="X-ray"/>
    <property type="resolution" value="1.80 A"/>
    <property type="chains" value="I=1-53"/>
</dbReference>
<dbReference type="PDB" id="6TKJ">
    <property type="method" value="X-ray"/>
    <property type="resolution" value="2.81 A"/>
    <property type="chains" value="I=1-53"/>
</dbReference>
<dbReference type="PDB" id="6TKL">
    <property type="method" value="X-ray"/>
    <property type="resolution" value="1.30 A"/>
    <property type="chains" value="I=1-53"/>
</dbReference>
<dbReference type="PDB" id="7PHX">
    <property type="method" value="X-ray"/>
    <property type="resolution" value="1.80 A"/>
    <property type="chains" value="I=22-53"/>
</dbReference>
<dbReference type="PDBsum" id="6TKG"/>
<dbReference type="PDBsum" id="6TKH"/>
<dbReference type="PDBsum" id="6TKI"/>
<dbReference type="PDBsum" id="6TKJ"/>
<dbReference type="PDBsum" id="6TKL"/>
<dbReference type="PDBsum" id="7PHX"/>
<dbReference type="SMR" id="O97373"/>
<dbReference type="MEROPS" id="I76.001"/>
<dbReference type="Proteomes" id="UP000092444">
    <property type="component" value="Unassembled WGS sequence"/>
</dbReference>
<dbReference type="GO" id="GO:0005576">
    <property type="term" value="C:extracellular region"/>
    <property type="evidence" value="ECO:0007669"/>
    <property type="project" value="UniProtKB-SubCell"/>
</dbReference>
<dbReference type="GO" id="GO:0004867">
    <property type="term" value="F:serine-type endopeptidase inhibitor activity"/>
    <property type="evidence" value="ECO:0007669"/>
    <property type="project" value="UniProtKB-KW"/>
</dbReference>
<organism>
    <name type="scientific">Glossina morsitans morsitans</name>
    <name type="common">Savannah tsetse fly</name>
    <dbReference type="NCBI Taxonomy" id="37546"/>
    <lineage>
        <taxon>Eukaryota</taxon>
        <taxon>Metazoa</taxon>
        <taxon>Ecdysozoa</taxon>
        <taxon>Arthropoda</taxon>
        <taxon>Hexapoda</taxon>
        <taxon>Insecta</taxon>
        <taxon>Pterygota</taxon>
        <taxon>Neoptera</taxon>
        <taxon>Endopterygota</taxon>
        <taxon>Diptera</taxon>
        <taxon>Brachycera</taxon>
        <taxon>Muscomorpha</taxon>
        <taxon>Hippoboscoidea</taxon>
        <taxon>Glossinidae</taxon>
        <taxon>Glossina</taxon>
    </lineage>
</organism>
<gene>
    <name type="primary">TTI</name>
</gene>
<name>TTI_GLOMM</name>
<reference key="1">
    <citation type="journal article" date="1998" name="Proc. Natl. Acad. Sci. U.S.A.">
        <title>Tsetse thrombin inhibitor: bloodmeal-induced expression of an anticoagulant in salivary glands and gut tissue of Glossina morsitans morsitans.</title>
        <authorList>
            <person name="Cappello M."/>
            <person name="Li S."/>
            <person name="Chen X."/>
            <person name="Li C.-B."/>
            <person name="Harrison L."/>
            <person name="Narashimhan S."/>
            <person name="Beard C.B."/>
            <person name="Aksoy S."/>
        </authorList>
    </citation>
    <scope>NUCLEOTIDE SEQUENCE [MRNA]</scope>
    <scope>TISSUE SPECIFICITY</scope>
    <source>
        <tissue>Salivary gland</tissue>
    </source>
</reference>
<reference key="2">
    <citation type="journal article" date="1996" name="Am. J. Trop. Med. Hyg.">
        <title>Isolation and characterization of the tsetse thrombin inhibitor: a potent antithrombotic peptide from the saliva of Glossina morsitans morsitans.</title>
        <authorList>
            <person name="Cappello M."/>
            <person name="Bergum P.W."/>
            <person name="Vlasuk G.P."/>
            <person name="Furmidge B.A."/>
            <person name="Pritchard D.I."/>
            <person name="Aksoy S."/>
        </authorList>
    </citation>
    <scope>PROTEIN SEQUENCE OF 22-42</scope>
    <scope>FUNCTION</scope>
    <scope>TISSUE SPECIFICITY</scope>
    <scope>MASS SPECTROMETRY</scope>
    <source>
        <tissue>Salivary gland</tissue>
    </source>
</reference>
<comment type="function">
    <text evidence="2">Potent and specific inhibitor of human thrombin. It is also a potent inhibitor of thrombin-induced platelet aggregation. It is capable of antagonizing host hemostasis and facilitating blood feeding.</text>
</comment>
<comment type="subcellular location">
    <subcellularLocation>
        <location>Secreted</location>
    </subcellularLocation>
</comment>
<comment type="tissue specificity">
    <text evidence="2 3">Expressed at high levels in salivary glands and midguts of adult tsetse flies.</text>
</comment>
<comment type="mass spectrometry" mass="3530.0" method="MALDI" evidence="2"/>
<feature type="signal peptide" evidence="1">
    <location>
        <begin position="1"/>
        <end position="21"/>
    </location>
</feature>
<feature type="chain" id="PRO_5000054168" description="Tsetse thrombin inhibitor">
    <location>
        <begin position="22"/>
        <end position="53"/>
    </location>
</feature>
<feature type="strand" evidence="4">
    <location>
        <begin position="24"/>
        <end position="26"/>
    </location>
</feature>
<feature type="helix" evidence="4">
    <location>
        <begin position="45"/>
        <end position="47"/>
    </location>
</feature>
<sequence length="53" mass="5800">MKFFTVLFFLLSIIYLIVAAPGEPGAPIDYDEYGDSSEEVGGTPLHEIPGIRL</sequence>